<protein>
    <recommendedName>
        <fullName evidence="1">ATP phosphoribosyltransferase</fullName>
        <shortName evidence="1">ATP-PRT</shortName>
        <shortName evidence="1">ATP-PRTase</shortName>
        <ecNumber evidence="1">2.4.2.17</ecNumber>
    </recommendedName>
</protein>
<sequence length="218" mass="23067">MSAPLTLALSKGRIFEETVPLLAAAGVTVAEDPETSRKLILPTTDPNLRVIVVRATDVPTYVEYGAADFGVAGKDVLLEHGGGGLYQPIDLNIARCRMSVAVPAGFDYANAVRQGARLRVATKYVETAREHFAAKGVHVDLIKLYGSMELAPLVGLADAIVDLVSSGGTLKANNLVEVEEIMPISSRLVVNQAALKLKRAALKPFLDAFERASLGSGA</sequence>
<gene>
    <name evidence="1" type="primary">hisG</name>
    <name type="ordered locus">BURPS668_3667</name>
</gene>
<dbReference type="EC" id="2.4.2.17" evidence="1"/>
<dbReference type="EMBL" id="CP000570">
    <property type="protein sequence ID" value="ABN81523.1"/>
    <property type="molecule type" value="Genomic_DNA"/>
</dbReference>
<dbReference type="RefSeq" id="WP_004199915.1">
    <property type="nucleotide sequence ID" value="NC_009074.1"/>
</dbReference>
<dbReference type="SMR" id="A3NEA0"/>
<dbReference type="GeneID" id="93061757"/>
<dbReference type="KEGG" id="bpd:BURPS668_3667"/>
<dbReference type="HOGENOM" id="CLU_038115_2_0_4"/>
<dbReference type="UniPathway" id="UPA00031">
    <property type="reaction ID" value="UER00006"/>
</dbReference>
<dbReference type="GO" id="GO:0005737">
    <property type="term" value="C:cytoplasm"/>
    <property type="evidence" value="ECO:0007669"/>
    <property type="project" value="UniProtKB-SubCell"/>
</dbReference>
<dbReference type="GO" id="GO:0005524">
    <property type="term" value="F:ATP binding"/>
    <property type="evidence" value="ECO:0007669"/>
    <property type="project" value="UniProtKB-KW"/>
</dbReference>
<dbReference type="GO" id="GO:0003879">
    <property type="term" value="F:ATP phosphoribosyltransferase activity"/>
    <property type="evidence" value="ECO:0007669"/>
    <property type="project" value="UniProtKB-UniRule"/>
</dbReference>
<dbReference type="GO" id="GO:0000105">
    <property type="term" value="P:L-histidine biosynthetic process"/>
    <property type="evidence" value="ECO:0007669"/>
    <property type="project" value="UniProtKB-UniRule"/>
</dbReference>
<dbReference type="CDD" id="cd13595">
    <property type="entry name" value="PBP2_HisGs"/>
    <property type="match status" value="1"/>
</dbReference>
<dbReference type="FunFam" id="3.40.190.10:FF:000011">
    <property type="entry name" value="ATP phosphoribosyltransferase"/>
    <property type="match status" value="1"/>
</dbReference>
<dbReference type="Gene3D" id="3.40.190.10">
    <property type="entry name" value="Periplasmic binding protein-like II"/>
    <property type="match status" value="2"/>
</dbReference>
<dbReference type="HAMAP" id="MF_01018">
    <property type="entry name" value="HisG_Short"/>
    <property type="match status" value="1"/>
</dbReference>
<dbReference type="InterPro" id="IPR013820">
    <property type="entry name" value="ATP_PRibTrfase_cat"/>
</dbReference>
<dbReference type="InterPro" id="IPR018198">
    <property type="entry name" value="ATP_PRibTrfase_CS"/>
</dbReference>
<dbReference type="InterPro" id="IPR001348">
    <property type="entry name" value="ATP_PRibTrfase_HisG"/>
</dbReference>
<dbReference type="InterPro" id="IPR024893">
    <property type="entry name" value="ATP_PRibTrfase_HisG_short"/>
</dbReference>
<dbReference type="NCBIfam" id="TIGR00070">
    <property type="entry name" value="hisG"/>
    <property type="match status" value="1"/>
</dbReference>
<dbReference type="PANTHER" id="PTHR21403:SF8">
    <property type="entry name" value="ATP PHOSPHORIBOSYLTRANSFERASE"/>
    <property type="match status" value="1"/>
</dbReference>
<dbReference type="PANTHER" id="PTHR21403">
    <property type="entry name" value="ATP PHOSPHORIBOSYLTRANSFERASE ATP-PRTASE"/>
    <property type="match status" value="1"/>
</dbReference>
<dbReference type="Pfam" id="PF01634">
    <property type="entry name" value="HisG"/>
    <property type="match status" value="1"/>
</dbReference>
<dbReference type="SUPFAM" id="SSF53850">
    <property type="entry name" value="Periplasmic binding protein-like II"/>
    <property type="match status" value="1"/>
</dbReference>
<dbReference type="PROSITE" id="PS01316">
    <property type="entry name" value="ATP_P_PHORIBOSYLTR"/>
    <property type="match status" value="1"/>
</dbReference>
<accession>A3NEA0</accession>
<comment type="function">
    <text evidence="1">Catalyzes the condensation of ATP and 5-phosphoribose 1-diphosphate to form N'-(5'-phosphoribosyl)-ATP (PR-ATP). Has a crucial role in the pathway because the rate of histidine biosynthesis seems to be controlled primarily by regulation of HisG enzymatic activity.</text>
</comment>
<comment type="catalytic activity">
    <reaction evidence="1">
        <text>1-(5-phospho-beta-D-ribosyl)-ATP + diphosphate = 5-phospho-alpha-D-ribose 1-diphosphate + ATP</text>
        <dbReference type="Rhea" id="RHEA:18473"/>
        <dbReference type="ChEBI" id="CHEBI:30616"/>
        <dbReference type="ChEBI" id="CHEBI:33019"/>
        <dbReference type="ChEBI" id="CHEBI:58017"/>
        <dbReference type="ChEBI" id="CHEBI:73183"/>
        <dbReference type="EC" id="2.4.2.17"/>
    </reaction>
</comment>
<comment type="pathway">
    <text evidence="1">Amino-acid biosynthesis; L-histidine biosynthesis; L-histidine from 5-phospho-alpha-D-ribose 1-diphosphate: step 1/9.</text>
</comment>
<comment type="subunit">
    <text evidence="1">Heteromultimer composed of HisG and HisZ subunits.</text>
</comment>
<comment type="subcellular location">
    <subcellularLocation>
        <location evidence="1">Cytoplasm</location>
    </subcellularLocation>
</comment>
<comment type="domain">
    <text>Lacks the C-terminal regulatory region which is replaced by HisZ.</text>
</comment>
<comment type="similarity">
    <text evidence="1">Belongs to the ATP phosphoribosyltransferase family. Short subfamily.</text>
</comment>
<feature type="chain" id="PRO_1000063274" description="ATP phosphoribosyltransferase">
    <location>
        <begin position="1"/>
        <end position="218"/>
    </location>
</feature>
<name>HIS1_BURP6</name>
<reference key="1">
    <citation type="journal article" date="2010" name="Genome Biol. Evol.">
        <title>Continuing evolution of Burkholderia mallei through genome reduction and large-scale rearrangements.</title>
        <authorList>
            <person name="Losada L."/>
            <person name="Ronning C.M."/>
            <person name="DeShazer D."/>
            <person name="Woods D."/>
            <person name="Fedorova N."/>
            <person name="Kim H.S."/>
            <person name="Shabalina S.A."/>
            <person name="Pearson T.R."/>
            <person name="Brinkac L."/>
            <person name="Tan P."/>
            <person name="Nandi T."/>
            <person name="Crabtree J."/>
            <person name="Badger J."/>
            <person name="Beckstrom-Sternberg S."/>
            <person name="Saqib M."/>
            <person name="Schutzer S.E."/>
            <person name="Keim P."/>
            <person name="Nierman W.C."/>
        </authorList>
    </citation>
    <scope>NUCLEOTIDE SEQUENCE [LARGE SCALE GENOMIC DNA]</scope>
    <source>
        <strain>668</strain>
    </source>
</reference>
<organism>
    <name type="scientific">Burkholderia pseudomallei (strain 668)</name>
    <dbReference type="NCBI Taxonomy" id="320373"/>
    <lineage>
        <taxon>Bacteria</taxon>
        <taxon>Pseudomonadati</taxon>
        <taxon>Pseudomonadota</taxon>
        <taxon>Betaproteobacteria</taxon>
        <taxon>Burkholderiales</taxon>
        <taxon>Burkholderiaceae</taxon>
        <taxon>Burkholderia</taxon>
        <taxon>pseudomallei group</taxon>
    </lineage>
</organism>
<keyword id="KW-0028">Amino-acid biosynthesis</keyword>
<keyword id="KW-0067">ATP-binding</keyword>
<keyword id="KW-0963">Cytoplasm</keyword>
<keyword id="KW-0328">Glycosyltransferase</keyword>
<keyword id="KW-0368">Histidine biosynthesis</keyword>
<keyword id="KW-0547">Nucleotide-binding</keyword>
<keyword id="KW-0808">Transferase</keyword>
<evidence type="ECO:0000255" key="1">
    <source>
        <dbReference type="HAMAP-Rule" id="MF_01018"/>
    </source>
</evidence>
<proteinExistence type="inferred from homology"/>